<organism>
    <name type="scientific">Legionella pneumophila (strain Paris)</name>
    <dbReference type="NCBI Taxonomy" id="297246"/>
    <lineage>
        <taxon>Bacteria</taxon>
        <taxon>Pseudomonadati</taxon>
        <taxon>Pseudomonadota</taxon>
        <taxon>Gammaproteobacteria</taxon>
        <taxon>Legionellales</taxon>
        <taxon>Legionellaceae</taxon>
        <taxon>Legionella</taxon>
    </lineage>
</organism>
<evidence type="ECO:0000255" key="1">
    <source>
        <dbReference type="HAMAP-Rule" id="MF_00165"/>
    </source>
</evidence>
<name>KTHY_LEGPA</name>
<gene>
    <name evidence="1" type="primary">tmk</name>
    <name type="ordered locus">lpp1354</name>
</gene>
<reference key="1">
    <citation type="journal article" date="2004" name="Nat. Genet.">
        <title>Evidence in the Legionella pneumophila genome for exploitation of host cell functions and high genome plasticity.</title>
        <authorList>
            <person name="Cazalet C."/>
            <person name="Rusniok C."/>
            <person name="Brueggemann H."/>
            <person name="Zidane N."/>
            <person name="Magnier A."/>
            <person name="Ma L."/>
            <person name="Tichit M."/>
            <person name="Jarraud S."/>
            <person name="Bouchier C."/>
            <person name="Vandenesch F."/>
            <person name="Kunst F."/>
            <person name="Etienne J."/>
            <person name="Glaser P."/>
            <person name="Buchrieser C."/>
        </authorList>
    </citation>
    <scope>NUCLEOTIDE SEQUENCE [LARGE SCALE GENOMIC DNA]</scope>
    <source>
        <strain>Paris</strain>
    </source>
</reference>
<proteinExistence type="inferred from homology"/>
<keyword id="KW-0067">ATP-binding</keyword>
<keyword id="KW-0418">Kinase</keyword>
<keyword id="KW-0545">Nucleotide biosynthesis</keyword>
<keyword id="KW-0547">Nucleotide-binding</keyword>
<keyword id="KW-0808">Transferase</keyword>
<protein>
    <recommendedName>
        <fullName evidence="1">Thymidylate kinase</fullName>
        <ecNumber evidence="1">2.7.4.9</ecNumber>
    </recommendedName>
    <alternativeName>
        <fullName evidence="1">dTMP kinase</fullName>
    </alternativeName>
</protein>
<comment type="function">
    <text evidence="1">Phosphorylation of dTMP to form dTDP in both de novo and salvage pathways of dTTP synthesis.</text>
</comment>
<comment type="catalytic activity">
    <reaction evidence="1">
        <text>dTMP + ATP = dTDP + ADP</text>
        <dbReference type="Rhea" id="RHEA:13517"/>
        <dbReference type="ChEBI" id="CHEBI:30616"/>
        <dbReference type="ChEBI" id="CHEBI:58369"/>
        <dbReference type="ChEBI" id="CHEBI:63528"/>
        <dbReference type="ChEBI" id="CHEBI:456216"/>
        <dbReference type="EC" id="2.7.4.9"/>
    </reaction>
</comment>
<comment type="similarity">
    <text evidence="1">Belongs to the thymidylate kinase family.</text>
</comment>
<feature type="chain" id="PRO_0000155290" description="Thymidylate kinase">
    <location>
        <begin position="1"/>
        <end position="212"/>
    </location>
</feature>
<feature type="binding site" evidence="1">
    <location>
        <begin position="13"/>
        <end position="20"/>
    </location>
    <ligand>
        <name>ATP</name>
        <dbReference type="ChEBI" id="CHEBI:30616"/>
    </ligand>
</feature>
<sequence>MSSLTGKLIVIEGLEGAGKSTAVNLVVELLSQKKISTITTREPGGTRIGEILRSIIKNPEYNNVLDDRSELLLLYAARIQLIEQVIKPALNVGQWVIADRFELSTLAYQGGGRKMNMRVINELSNFCLKGFKPDLTLYLDINPELGMIRAKSRGKFDRIEQESIEFFHRIHDTYHVLVKQNPEIMMIDANRSLDEVQSSIQSVIEEFIEHNL</sequence>
<dbReference type="EC" id="2.7.4.9" evidence="1"/>
<dbReference type="EMBL" id="CR628336">
    <property type="protein sequence ID" value="CAH12505.1"/>
    <property type="molecule type" value="Genomic_DNA"/>
</dbReference>
<dbReference type="RefSeq" id="WP_011213691.1">
    <property type="nucleotide sequence ID" value="NC_006368.1"/>
</dbReference>
<dbReference type="SMR" id="Q5X5G6"/>
<dbReference type="KEGG" id="lpp:lpp1354"/>
<dbReference type="LegioList" id="lpp1354"/>
<dbReference type="HOGENOM" id="CLU_049131_0_1_6"/>
<dbReference type="GO" id="GO:0005829">
    <property type="term" value="C:cytosol"/>
    <property type="evidence" value="ECO:0007669"/>
    <property type="project" value="TreeGrafter"/>
</dbReference>
<dbReference type="GO" id="GO:0005524">
    <property type="term" value="F:ATP binding"/>
    <property type="evidence" value="ECO:0007669"/>
    <property type="project" value="UniProtKB-UniRule"/>
</dbReference>
<dbReference type="GO" id="GO:0004798">
    <property type="term" value="F:dTMP kinase activity"/>
    <property type="evidence" value="ECO:0007669"/>
    <property type="project" value="UniProtKB-UniRule"/>
</dbReference>
<dbReference type="GO" id="GO:0006233">
    <property type="term" value="P:dTDP biosynthetic process"/>
    <property type="evidence" value="ECO:0007669"/>
    <property type="project" value="InterPro"/>
</dbReference>
<dbReference type="GO" id="GO:0006235">
    <property type="term" value="P:dTTP biosynthetic process"/>
    <property type="evidence" value="ECO:0007669"/>
    <property type="project" value="UniProtKB-UniRule"/>
</dbReference>
<dbReference type="GO" id="GO:0006227">
    <property type="term" value="P:dUDP biosynthetic process"/>
    <property type="evidence" value="ECO:0007669"/>
    <property type="project" value="TreeGrafter"/>
</dbReference>
<dbReference type="CDD" id="cd01672">
    <property type="entry name" value="TMPK"/>
    <property type="match status" value="1"/>
</dbReference>
<dbReference type="FunFam" id="3.40.50.300:FF:000225">
    <property type="entry name" value="Thymidylate kinase"/>
    <property type="match status" value="1"/>
</dbReference>
<dbReference type="Gene3D" id="3.40.50.300">
    <property type="entry name" value="P-loop containing nucleotide triphosphate hydrolases"/>
    <property type="match status" value="1"/>
</dbReference>
<dbReference type="HAMAP" id="MF_00165">
    <property type="entry name" value="Thymidylate_kinase"/>
    <property type="match status" value="1"/>
</dbReference>
<dbReference type="InterPro" id="IPR027417">
    <property type="entry name" value="P-loop_NTPase"/>
</dbReference>
<dbReference type="InterPro" id="IPR039430">
    <property type="entry name" value="Thymidylate_kin-like_dom"/>
</dbReference>
<dbReference type="InterPro" id="IPR018094">
    <property type="entry name" value="Thymidylate_kinase"/>
</dbReference>
<dbReference type="NCBIfam" id="TIGR00041">
    <property type="entry name" value="DTMP_kinase"/>
    <property type="match status" value="1"/>
</dbReference>
<dbReference type="PANTHER" id="PTHR10344">
    <property type="entry name" value="THYMIDYLATE KINASE"/>
    <property type="match status" value="1"/>
</dbReference>
<dbReference type="PANTHER" id="PTHR10344:SF4">
    <property type="entry name" value="UMP-CMP KINASE 2, MITOCHONDRIAL"/>
    <property type="match status" value="1"/>
</dbReference>
<dbReference type="Pfam" id="PF02223">
    <property type="entry name" value="Thymidylate_kin"/>
    <property type="match status" value="1"/>
</dbReference>
<dbReference type="SUPFAM" id="SSF52540">
    <property type="entry name" value="P-loop containing nucleoside triphosphate hydrolases"/>
    <property type="match status" value="1"/>
</dbReference>
<accession>Q5X5G6</accession>